<accession>Q85C43</accession>
<accession>Q85DF3</accession>
<organism>
    <name type="scientific">Scapanus orarius</name>
    <name type="common">Coast mole</name>
    <dbReference type="NCBI Taxonomy" id="182674"/>
    <lineage>
        <taxon>Eukaryota</taxon>
        <taxon>Metazoa</taxon>
        <taxon>Chordata</taxon>
        <taxon>Craniata</taxon>
        <taxon>Vertebrata</taxon>
        <taxon>Euteleostomi</taxon>
        <taxon>Mammalia</taxon>
        <taxon>Eutheria</taxon>
        <taxon>Laurasiatheria</taxon>
        <taxon>Eulipotyphla</taxon>
        <taxon>Talpidae</taxon>
        <taxon>Scapanus</taxon>
    </lineage>
</organism>
<geneLocation type="mitochondrion"/>
<gene>
    <name type="primary">MT-CYB</name>
    <name type="synonym">COB</name>
    <name type="synonym">CYTB</name>
    <name type="synonym">MTCYB</name>
</gene>
<protein>
    <recommendedName>
        <fullName>Cytochrome b</fullName>
    </recommendedName>
    <alternativeName>
        <fullName>Complex III subunit 3</fullName>
    </alternativeName>
    <alternativeName>
        <fullName>Complex III subunit III</fullName>
    </alternativeName>
    <alternativeName>
        <fullName>Cytochrome b-c1 complex subunit 3</fullName>
    </alternativeName>
    <alternativeName>
        <fullName>Ubiquinol-cytochrome-c reductase complex cytochrome b subunit</fullName>
    </alternativeName>
</protein>
<keyword id="KW-0249">Electron transport</keyword>
<keyword id="KW-0349">Heme</keyword>
<keyword id="KW-0408">Iron</keyword>
<keyword id="KW-0472">Membrane</keyword>
<keyword id="KW-0479">Metal-binding</keyword>
<keyword id="KW-0496">Mitochondrion</keyword>
<keyword id="KW-0999">Mitochondrion inner membrane</keyword>
<keyword id="KW-0679">Respiratory chain</keyword>
<keyword id="KW-0812">Transmembrane</keyword>
<keyword id="KW-1133">Transmembrane helix</keyword>
<keyword id="KW-0813">Transport</keyword>
<keyword id="KW-0830">Ubiquinone</keyword>
<feature type="chain" id="PRO_0000061525" description="Cytochrome b">
    <location>
        <begin position="1"/>
        <end position="379"/>
    </location>
</feature>
<feature type="transmembrane region" description="Helical" evidence="2">
    <location>
        <begin position="33"/>
        <end position="53"/>
    </location>
</feature>
<feature type="transmembrane region" description="Helical" evidence="2">
    <location>
        <begin position="77"/>
        <end position="98"/>
    </location>
</feature>
<feature type="transmembrane region" description="Helical" evidence="2">
    <location>
        <begin position="113"/>
        <end position="133"/>
    </location>
</feature>
<feature type="transmembrane region" description="Helical" evidence="2">
    <location>
        <begin position="178"/>
        <end position="198"/>
    </location>
</feature>
<feature type="transmembrane region" description="Helical" evidence="2">
    <location>
        <begin position="226"/>
        <end position="246"/>
    </location>
</feature>
<feature type="transmembrane region" description="Helical" evidence="2">
    <location>
        <begin position="288"/>
        <end position="308"/>
    </location>
</feature>
<feature type="transmembrane region" description="Helical" evidence="2">
    <location>
        <begin position="320"/>
        <end position="340"/>
    </location>
</feature>
<feature type="transmembrane region" description="Helical" evidence="2">
    <location>
        <begin position="347"/>
        <end position="367"/>
    </location>
</feature>
<feature type="binding site" description="axial binding residue" evidence="2">
    <location>
        <position position="83"/>
    </location>
    <ligand>
        <name>heme b</name>
        <dbReference type="ChEBI" id="CHEBI:60344"/>
        <label>b562</label>
    </ligand>
    <ligandPart>
        <name>Fe</name>
        <dbReference type="ChEBI" id="CHEBI:18248"/>
    </ligandPart>
</feature>
<feature type="binding site" description="axial binding residue" evidence="2">
    <location>
        <position position="97"/>
    </location>
    <ligand>
        <name>heme b</name>
        <dbReference type="ChEBI" id="CHEBI:60344"/>
        <label>b566</label>
    </ligand>
    <ligandPart>
        <name>Fe</name>
        <dbReference type="ChEBI" id="CHEBI:18248"/>
    </ligandPart>
</feature>
<feature type="binding site" description="axial binding residue" evidence="2">
    <location>
        <position position="182"/>
    </location>
    <ligand>
        <name>heme b</name>
        <dbReference type="ChEBI" id="CHEBI:60344"/>
        <label>b562</label>
    </ligand>
    <ligandPart>
        <name>Fe</name>
        <dbReference type="ChEBI" id="CHEBI:18248"/>
    </ligandPart>
</feature>
<feature type="binding site" description="axial binding residue" evidence="2">
    <location>
        <position position="196"/>
    </location>
    <ligand>
        <name>heme b</name>
        <dbReference type="ChEBI" id="CHEBI:60344"/>
        <label>b566</label>
    </ligand>
    <ligandPart>
        <name>Fe</name>
        <dbReference type="ChEBI" id="CHEBI:18248"/>
    </ligandPart>
</feature>
<feature type="binding site" evidence="2">
    <location>
        <position position="201"/>
    </location>
    <ligand>
        <name>a ubiquinone</name>
        <dbReference type="ChEBI" id="CHEBI:16389"/>
    </ligand>
</feature>
<feature type="sequence variant" description="In strain: Isolate CM-3.">
    <original>M</original>
    <variation>I</variation>
    <location>
        <position position="39"/>
    </location>
</feature>
<comment type="function">
    <text evidence="2">Component of the ubiquinol-cytochrome c reductase complex (complex III or cytochrome b-c1 complex) that is part of the mitochondrial respiratory chain. The b-c1 complex mediates electron transfer from ubiquinol to cytochrome c. Contributes to the generation of a proton gradient across the mitochondrial membrane that is then used for ATP synthesis.</text>
</comment>
<comment type="cofactor">
    <cofactor evidence="2">
        <name>heme b</name>
        <dbReference type="ChEBI" id="CHEBI:60344"/>
    </cofactor>
    <text evidence="2">Binds 2 heme b groups non-covalently.</text>
</comment>
<comment type="subunit">
    <text evidence="2">The cytochrome bc1 complex contains 11 subunits: 3 respiratory subunits (MT-CYB, CYC1 and UQCRFS1), 2 core proteins (UQCRC1 and UQCRC2) and 6 low-molecular weight proteins (UQCRH/QCR6, UQCRB/QCR7, UQCRQ/QCR8, UQCR10/QCR9, UQCR11/QCR10 and a cleavage product of UQCRFS1). This cytochrome bc1 complex then forms a dimer.</text>
</comment>
<comment type="subcellular location">
    <subcellularLocation>
        <location evidence="2">Mitochondrion inner membrane</location>
        <topology evidence="2">Multi-pass membrane protein</topology>
    </subcellularLocation>
</comment>
<comment type="miscellaneous">
    <text evidence="1">Heme 1 (or BL or b562) is low-potential and absorbs at about 562 nm, and heme 2 (or BH or b566) is high-potential and absorbs at about 566 nm.</text>
</comment>
<comment type="similarity">
    <text evidence="3 4">Belongs to the cytochrome b family.</text>
</comment>
<comment type="caution">
    <text evidence="2">The full-length protein contains only eight transmembrane helices, not nine as predicted by bioinformatics tools.</text>
</comment>
<proteinExistence type="inferred from homology"/>
<evidence type="ECO:0000250" key="1"/>
<evidence type="ECO:0000250" key="2">
    <source>
        <dbReference type="UniProtKB" id="P00157"/>
    </source>
</evidence>
<evidence type="ECO:0000255" key="3">
    <source>
        <dbReference type="PROSITE-ProRule" id="PRU00967"/>
    </source>
</evidence>
<evidence type="ECO:0000255" key="4">
    <source>
        <dbReference type="PROSITE-ProRule" id="PRU00968"/>
    </source>
</evidence>
<name>CYB_SCAOR</name>
<dbReference type="EMBL" id="AB076815">
    <property type="protein sequence ID" value="BAC75900.1"/>
    <property type="molecule type" value="Genomic_DNA"/>
</dbReference>
<dbReference type="EMBL" id="AB076816">
    <property type="protein sequence ID" value="BAC75901.1"/>
    <property type="molecule type" value="Genomic_DNA"/>
</dbReference>
<dbReference type="EMBL" id="AB076817">
    <property type="protein sequence ID" value="BAC75902.1"/>
    <property type="molecule type" value="Genomic_DNA"/>
</dbReference>
<dbReference type="SMR" id="Q85C43"/>
<dbReference type="GO" id="GO:0005743">
    <property type="term" value="C:mitochondrial inner membrane"/>
    <property type="evidence" value="ECO:0007669"/>
    <property type="project" value="UniProtKB-SubCell"/>
</dbReference>
<dbReference type="GO" id="GO:0045275">
    <property type="term" value="C:respiratory chain complex III"/>
    <property type="evidence" value="ECO:0007669"/>
    <property type="project" value="InterPro"/>
</dbReference>
<dbReference type="GO" id="GO:0046872">
    <property type="term" value="F:metal ion binding"/>
    <property type="evidence" value="ECO:0007669"/>
    <property type="project" value="UniProtKB-KW"/>
</dbReference>
<dbReference type="GO" id="GO:0008121">
    <property type="term" value="F:ubiquinol-cytochrome-c reductase activity"/>
    <property type="evidence" value="ECO:0007669"/>
    <property type="project" value="InterPro"/>
</dbReference>
<dbReference type="GO" id="GO:0006122">
    <property type="term" value="P:mitochondrial electron transport, ubiquinol to cytochrome c"/>
    <property type="evidence" value="ECO:0007669"/>
    <property type="project" value="TreeGrafter"/>
</dbReference>
<dbReference type="CDD" id="cd00290">
    <property type="entry name" value="cytochrome_b_C"/>
    <property type="match status" value="1"/>
</dbReference>
<dbReference type="CDD" id="cd00284">
    <property type="entry name" value="Cytochrome_b_N"/>
    <property type="match status" value="1"/>
</dbReference>
<dbReference type="FunFam" id="1.20.810.10:FF:000002">
    <property type="entry name" value="Cytochrome b"/>
    <property type="match status" value="1"/>
</dbReference>
<dbReference type="Gene3D" id="1.20.810.10">
    <property type="entry name" value="Cytochrome Bc1 Complex, Chain C"/>
    <property type="match status" value="1"/>
</dbReference>
<dbReference type="InterPro" id="IPR005798">
    <property type="entry name" value="Cyt_b/b6_C"/>
</dbReference>
<dbReference type="InterPro" id="IPR036150">
    <property type="entry name" value="Cyt_b/b6_C_sf"/>
</dbReference>
<dbReference type="InterPro" id="IPR005797">
    <property type="entry name" value="Cyt_b/b6_N"/>
</dbReference>
<dbReference type="InterPro" id="IPR027387">
    <property type="entry name" value="Cytb/b6-like_sf"/>
</dbReference>
<dbReference type="InterPro" id="IPR030689">
    <property type="entry name" value="Cytochrome_b"/>
</dbReference>
<dbReference type="InterPro" id="IPR048260">
    <property type="entry name" value="Cytochrome_b_C_euk/bac"/>
</dbReference>
<dbReference type="InterPro" id="IPR048259">
    <property type="entry name" value="Cytochrome_b_N_euk/bac"/>
</dbReference>
<dbReference type="InterPro" id="IPR016174">
    <property type="entry name" value="Di-haem_cyt_TM"/>
</dbReference>
<dbReference type="PANTHER" id="PTHR19271">
    <property type="entry name" value="CYTOCHROME B"/>
    <property type="match status" value="1"/>
</dbReference>
<dbReference type="PANTHER" id="PTHR19271:SF16">
    <property type="entry name" value="CYTOCHROME B"/>
    <property type="match status" value="1"/>
</dbReference>
<dbReference type="Pfam" id="PF00032">
    <property type="entry name" value="Cytochrom_B_C"/>
    <property type="match status" value="1"/>
</dbReference>
<dbReference type="Pfam" id="PF00033">
    <property type="entry name" value="Cytochrome_B"/>
    <property type="match status" value="1"/>
</dbReference>
<dbReference type="PIRSF" id="PIRSF038885">
    <property type="entry name" value="COB"/>
    <property type="match status" value="1"/>
</dbReference>
<dbReference type="SUPFAM" id="SSF81648">
    <property type="entry name" value="a domain/subunit of cytochrome bc1 complex (Ubiquinol-cytochrome c reductase)"/>
    <property type="match status" value="1"/>
</dbReference>
<dbReference type="SUPFAM" id="SSF81342">
    <property type="entry name" value="Transmembrane di-heme cytochromes"/>
    <property type="match status" value="1"/>
</dbReference>
<dbReference type="PROSITE" id="PS51003">
    <property type="entry name" value="CYTB_CTER"/>
    <property type="match status" value="1"/>
</dbReference>
<dbReference type="PROSITE" id="PS51002">
    <property type="entry name" value="CYTB_NTER"/>
    <property type="match status" value="1"/>
</dbReference>
<sequence>MTNIRKTHPLMKIVNNSFIDLPAPSNISSWWNFGSLLGMCLILQILTGLFLAMHYTSDTMTAFSSVTHICRDVNYGWLIRYMHANGASMFFICLFLHVGRGLYYGSYMFMETWNIGVLLLFAVMATAFMGYVLPWGQMSFWGATVITNLLSAIPYIGTDLVEWIWGGFSVDKATLTRFFAFHFILPFIVAALAGVHLLFLHETGSNNPSGLSSDSDKIPFHPYYTIKDILGALILILALSSLVLFSPDLLGDPDNYIPANPLNTPPHIKPEWYFLFAYAILRSIPNKLGGVLALVFSILVLMLMPLLHTSKQRSMMFRPISQCLFWLLVADLLTLTWIGGQPVEYPFVIIGQLASILYFTLILILMPIASLVENHLLKW</sequence>
<reference key="1">
    <citation type="journal article" date="2003" name="Mol. Phylogenet. Evol.">
        <title>Molecular phylogenetic relationships of moles, shrew moles, and desmans from the new and old worlds.</title>
        <authorList>
            <person name="Shinohara A."/>
            <person name="Campbell K.L."/>
            <person name="Suzuki H."/>
        </authorList>
    </citation>
    <scope>NUCLEOTIDE SEQUENCE [GENOMIC DNA]</scope>
    <source>
        <strain>Isolate CM-1</strain>
        <strain>Isolate CM-3</strain>
        <strain>Isolate CM-4</strain>
    </source>
</reference>